<gene>
    <name evidence="1" type="primary">murA</name>
    <name type="ordered locus">SeD_A3666</name>
</gene>
<reference key="1">
    <citation type="journal article" date="2011" name="J. Bacteriol.">
        <title>Comparative genomics of 28 Salmonella enterica isolates: evidence for CRISPR-mediated adaptive sublineage evolution.</title>
        <authorList>
            <person name="Fricke W.F."/>
            <person name="Mammel M.K."/>
            <person name="McDermott P.F."/>
            <person name="Tartera C."/>
            <person name="White D.G."/>
            <person name="Leclerc J.E."/>
            <person name="Ravel J."/>
            <person name="Cebula T.A."/>
        </authorList>
    </citation>
    <scope>NUCLEOTIDE SEQUENCE [LARGE SCALE GENOMIC DNA]</scope>
    <source>
        <strain>CT_02021853</strain>
    </source>
</reference>
<evidence type="ECO:0000255" key="1">
    <source>
        <dbReference type="HAMAP-Rule" id="MF_00111"/>
    </source>
</evidence>
<name>MURA_SALDC</name>
<organism>
    <name type="scientific">Salmonella dublin (strain CT_02021853)</name>
    <dbReference type="NCBI Taxonomy" id="439851"/>
    <lineage>
        <taxon>Bacteria</taxon>
        <taxon>Pseudomonadati</taxon>
        <taxon>Pseudomonadota</taxon>
        <taxon>Gammaproteobacteria</taxon>
        <taxon>Enterobacterales</taxon>
        <taxon>Enterobacteriaceae</taxon>
        <taxon>Salmonella</taxon>
    </lineage>
</organism>
<protein>
    <recommendedName>
        <fullName evidence="1">UDP-N-acetylglucosamine 1-carboxyvinyltransferase</fullName>
        <ecNumber evidence="1">2.5.1.7</ecNumber>
    </recommendedName>
    <alternativeName>
        <fullName evidence="1">Enoylpyruvate transferase</fullName>
    </alternativeName>
    <alternativeName>
        <fullName evidence="1">UDP-N-acetylglucosamine enolpyruvyl transferase</fullName>
        <shortName evidence="1">EPT</shortName>
    </alternativeName>
</protein>
<comment type="function">
    <text evidence="1">Cell wall formation. Adds enolpyruvyl to UDP-N-acetylglucosamine.</text>
</comment>
<comment type="catalytic activity">
    <reaction evidence="1">
        <text>phosphoenolpyruvate + UDP-N-acetyl-alpha-D-glucosamine = UDP-N-acetyl-3-O-(1-carboxyvinyl)-alpha-D-glucosamine + phosphate</text>
        <dbReference type="Rhea" id="RHEA:18681"/>
        <dbReference type="ChEBI" id="CHEBI:43474"/>
        <dbReference type="ChEBI" id="CHEBI:57705"/>
        <dbReference type="ChEBI" id="CHEBI:58702"/>
        <dbReference type="ChEBI" id="CHEBI:68483"/>
        <dbReference type="EC" id="2.5.1.7"/>
    </reaction>
</comment>
<comment type="pathway">
    <text evidence="1">Cell wall biogenesis; peptidoglycan biosynthesis.</text>
</comment>
<comment type="subcellular location">
    <subcellularLocation>
        <location evidence="1">Cytoplasm</location>
    </subcellularLocation>
</comment>
<comment type="similarity">
    <text evidence="1">Belongs to the EPSP synthase family. MurA subfamily.</text>
</comment>
<sequence length="419" mass="44755">MDKFRVQGPTTLQGEVTISGAKNAALPILFAALLAEEPVEIQNVPKLKDVDTSMKLLSQLGAKVERNGSVHIDASQVNVFCAPYDLVKTMRASIWALGPLVARFGQGQVSLPGGCTIGARPVDLHITGLEQLGATIKLEEGYVKASVEGRLKGAHIVMDKVSVGATVTIMCAATLAEGTTIIENAAREPEIVDTANFLVTLGAKIAGQGTDRITIEGVERLGGGVYRVLPDRIETGTFLVAAAISRGKILCRNAQPDTLDAVLAKLRDAGADIEVGEDWISLDMHGKRPKAVNVRTAPHPAFPTDMQAQFTLLNLVAEGTGFITETVFENRFMHVPELSRMGARAEIESNTVICHGIETLSGAQVMATDLRASASLVLAGCIAEGTTIVDRIYHIDRGYERIEDKLRALGANIERVKGE</sequence>
<keyword id="KW-0131">Cell cycle</keyword>
<keyword id="KW-0132">Cell division</keyword>
<keyword id="KW-0133">Cell shape</keyword>
<keyword id="KW-0961">Cell wall biogenesis/degradation</keyword>
<keyword id="KW-0963">Cytoplasm</keyword>
<keyword id="KW-0573">Peptidoglycan synthesis</keyword>
<keyword id="KW-0670">Pyruvate</keyword>
<keyword id="KW-0808">Transferase</keyword>
<dbReference type="EC" id="2.5.1.7" evidence="1"/>
<dbReference type="EMBL" id="CP001144">
    <property type="protein sequence ID" value="ACH75047.1"/>
    <property type="molecule type" value="Genomic_DNA"/>
</dbReference>
<dbReference type="RefSeq" id="WP_000357287.1">
    <property type="nucleotide sequence ID" value="NC_011205.1"/>
</dbReference>
<dbReference type="SMR" id="B5FIN7"/>
<dbReference type="KEGG" id="sed:SeD_A3666"/>
<dbReference type="HOGENOM" id="CLU_027387_0_0_6"/>
<dbReference type="UniPathway" id="UPA00219"/>
<dbReference type="Proteomes" id="UP000008322">
    <property type="component" value="Chromosome"/>
</dbReference>
<dbReference type="GO" id="GO:0005737">
    <property type="term" value="C:cytoplasm"/>
    <property type="evidence" value="ECO:0007669"/>
    <property type="project" value="UniProtKB-SubCell"/>
</dbReference>
<dbReference type="GO" id="GO:0008760">
    <property type="term" value="F:UDP-N-acetylglucosamine 1-carboxyvinyltransferase activity"/>
    <property type="evidence" value="ECO:0007669"/>
    <property type="project" value="UniProtKB-UniRule"/>
</dbReference>
<dbReference type="GO" id="GO:0051301">
    <property type="term" value="P:cell division"/>
    <property type="evidence" value="ECO:0007669"/>
    <property type="project" value="UniProtKB-KW"/>
</dbReference>
<dbReference type="GO" id="GO:0071555">
    <property type="term" value="P:cell wall organization"/>
    <property type="evidence" value="ECO:0007669"/>
    <property type="project" value="UniProtKB-KW"/>
</dbReference>
<dbReference type="GO" id="GO:0009252">
    <property type="term" value="P:peptidoglycan biosynthetic process"/>
    <property type="evidence" value="ECO:0007669"/>
    <property type="project" value="UniProtKB-UniRule"/>
</dbReference>
<dbReference type="GO" id="GO:0008360">
    <property type="term" value="P:regulation of cell shape"/>
    <property type="evidence" value="ECO:0007669"/>
    <property type="project" value="UniProtKB-KW"/>
</dbReference>
<dbReference type="GO" id="GO:0019277">
    <property type="term" value="P:UDP-N-acetylgalactosamine biosynthetic process"/>
    <property type="evidence" value="ECO:0007669"/>
    <property type="project" value="InterPro"/>
</dbReference>
<dbReference type="CDD" id="cd01555">
    <property type="entry name" value="UdpNAET"/>
    <property type="match status" value="1"/>
</dbReference>
<dbReference type="FunFam" id="3.65.10.10:FF:000002">
    <property type="entry name" value="UDP-N-acetylglucosamine 1-carboxyvinyltransferase"/>
    <property type="match status" value="1"/>
</dbReference>
<dbReference type="Gene3D" id="3.65.10.10">
    <property type="entry name" value="Enolpyruvate transferase domain"/>
    <property type="match status" value="2"/>
</dbReference>
<dbReference type="HAMAP" id="MF_00111">
    <property type="entry name" value="MurA"/>
    <property type="match status" value="1"/>
</dbReference>
<dbReference type="InterPro" id="IPR001986">
    <property type="entry name" value="Enolpyruvate_Tfrase_dom"/>
</dbReference>
<dbReference type="InterPro" id="IPR036968">
    <property type="entry name" value="Enolpyruvate_Tfrase_sf"/>
</dbReference>
<dbReference type="InterPro" id="IPR050068">
    <property type="entry name" value="MurA_subfamily"/>
</dbReference>
<dbReference type="InterPro" id="IPR013792">
    <property type="entry name" value="RNA3'P_cycl/enolpyr_Trfase_a/b"/>
</dbReference>
<dbReference type="InterPro" id="IPR005750">
    <property type="entry name" value="UDP_GlcNAc_COvinyl_MurA"/>
</dbReference>
<dbReference type="NCBIfam" id="TIGR01072">
    <property type="entry name" value="murA"/>
    <property type="match status" value="1"/>
</dbReference>
<dbReference type="NCBIfam" id="NF006873">
    <property type="entry name" value="PRK09369.1"/>
    <property type="match status" value="1"/>
</dbReference>
<dbReference type="PANTHER" id="PTHR43783">
    <property type="entry name" value="UDP-N-ACETYLGLUCOSAMINE 1-CARBOXYVINYLTRANSFERASE"/>
    <property type="match status" value="1"/>
</dbReference>
<dbReference type="PANTHER" id="PTHR43783:SF1">
    <property type="entry name" value="UDP-N-ACETYLGLUCOSAMINE 1-CARBOXYVINYLTRANSFERASE"/>
    <property type="match status" value="1"/>
</dbReference>
<dbReference type="Pfam" id="PF00275">
    <property type="entry name" value="EPSP_synthase"/>
    <property type="match status" value="1"/>
</dbReference>
<dbReference type="SUPFAM" id="SSF55205">
    <property type="entry name" value="EPT/RTPC-like"/>
    <property type="match status" value="1"/>
</dbReference>
<proteinExistence type="inferred from homology"/>
<feature type="chain" id="PRO_1000094717" description="UDP-N-acetylglucosamine 1-carboxyvinyltransferase">
    <location>
        <begin position="1"/>
        <end position="419"/>
    </location>
</feature>
<feature type="active site" description="Proton donor" evidence="1">
    <location>
        <position position="115"/>
    </location>
</feature>
<feature type="binding site" evidence="1">
    <location>
        <begin position="22"/>
        <end position="23"/>
    </location>
    <ligand>
        <name>phosphoenolpyruvate</name>
        <dbReference type="ChEBI" id="CHEBI:58702"/>
    </ligand>
</feature>
<feature type="binding site" evidence="1">
    <location>
        <position position="91"/>
    </location>
    <ligand>
        <name>UDP-N-acetyl-alpha-D-glucosamine</name>
        <dbReference type="ChEBI" id="CHEBI:57705"/>
    </ligand>
</feature>
<feature type="binding site" evidence="1">
    <location>
        <begin position="120"/>
        <end position="124"/>
    </location>
    <ligand>
        <name>UDP-N-acetyl-alpha-D-glucosamine</name>
        <dbReference type="ChEBI" id="CHEBI:57705"/>
    </ligand>
</feature>
<feature type="binding site" evidence="1">
    <location>
        <begin position="160"/>
        <end position="163"/>
    </location>
    <ligand>
        <name>UDP-N-acetyl-alpha-D-glucosamine</name>
        <dbReference type="ChEBI" id="CHEBI:57705"/>
    </ligand>
</feature>
<feature type="binding site" evidence="1">
    <location>
        <position position="305"/>
    </location>
    <ligand>
        <name>UDP-N-acetyl-alpha-D-glucosamine</name>
        <dbReference type="ChEBI" id="CHEBI:57705"/>
    </ligand>
</feature>
<feature type="binding site" evidence="1">
    <location>
        <position position="327"/>
    </location>
    <ligand>
        <name>UDP-N-acetyl-alpha-D-glucosamine</name>
        <dbReference type="ChEBI" id="CHEBI:57705"/>
    </ligand>
</feature>
<feature type="modified residue" description="2-(S-cysteinyl)pyruvic acid O-phosphothioketal" evidence="1">
    <location>
        <position position="115"/>
    </location>
</feature>
<accession>B5FIN7</accession>